<reference key="1">
    <citation type="journal article" date="2006" name="J. Bacteriol.">
        <title>Pathogenomic sequence analysis of Bacillus cereus and Bacillus thuringiensis isolates closely related to Bacillus anthracis.</title>
        <authorList>
            <person name="Han C.S."/>
            <person name="Xie G."/>
            <person name="Challacombe J.F."/>
            <person name="Altherr M.R."/>
            <person name="Bhotika S.S."/>
            <person name="Bruce D."/>
            <person name="Campbell C.S."/>
            <person name="Campbell M.L."/>
            <person name="Chen J."/>
            <person name="Chertkov O."/>
            <person name="Cleland C."/>
            <person name="Dimitrijevic M."/>
            <person name="Doggett N.A."/>
            <person name="Fawcett J.J."/>
            <person name="Glavina T."/>
            <person name="Goodwin L.A."/>
            <person name="Hill K.K."/>
            <person name="Hitchcock P."/>
            <person name="Jackson P.J."/>
            <person name="Keim P."/>
            <person name="Kewalramani A.R."/>
            <person name="Longmire J."/>
            <person name="Lucas S."/>
            <person name="Malfatti S."/>
            <person name="McMurry K."/>
            <person name="Meincke L.J."/>
            <person name="Misra M."/>
            <person name="Moseman B.L."/>
            <person name="Mundt M."/>
            <person name="Munk A.C."/>
            <person name="Okinaka R.T."/>
            <person name="Parson-Quintana B."/>
            <person name="Reilly L.P."/>
            <person name="Richardson P."/>
            <person name="Robinson D.L."/>
            <person name="Rubin E."/>
            <person name="Saunders E."/>
            <person name="Tapia R."/>
            <person name="Tesmer J.G."/>
            <person name="Thayer N."/>
            <person name="Thompson L.S."/>
            <person name="Tice H."/>
            <person name="Ticknor L.O."/>
            <person name="Wills P.L."/>
            <person name="Brettin T.S."/>
            <person name="Gilna P."/>
        </authorList>
    </citation>
    <scope>NUCLEOTIDE SEQUENCE [LARGE SCALE GENOMIC DNA]</scope>
    <source>
        <strain>97-27</strain>
    </source>
</reference>
<protein>
    <recommendedName>
        <fullName evidence="1">Carbamoyl phosphate synthase small chain</fullName>
        <ecNumber evidence="1">6.3.5.5</ecNumber>
    </recommendedName>
    <alternativeName>
        <fullName evidence="1">Carbamoyl phosphate synthetase glutamine chain</fullName>
    </alternativeName>
</protein>
<feature type="chain" id="PRO_0000112253" description="Carbamoyl phosphate synthase small chain">
    <location>
        <begin position="1"/>
        <end position="365"/>
    </location>
</feature>
<feature type="domain" description="Glutamine amidotransferase type-1" evidence="1">
    <location>
        <begin position="170"/>
        <end position="357"/>
    </location>
</feature>
<feature type="region of interest" description="CPSase" evidence="1">
    <location>
        <begin position="1"/>
        <end position="169"/>
    </location>
</feature>
<feature type="active site" description="Nucleophile" evidence="1">
    <location>
        <position position="245"/>
    </location>
</feature>
<feature type="active site" evidence="1">
    <location>
        <position position="330"/>
    </location>
</feature>
<feature type="active site" evidence="1">
    <location>
        <position position="332"/>
    </location>
</feature>
<feature type="binding site" evidence="1">
    <location>
        <position position="45"/>
    </location>
    <ligand>
        <name>L-glutamine</name>
        <dbReference type="ChEBI" id="CHEBI:58359"/>
    </ligand>
</feature>
<feature type="binding site" evidence="1">
    <location>
        <position position="218"/>
    </location>
    <ligand>
        <name>L-glutamine</name>
        <dbReference type="ChEBI" id="CHEBI:58359"/>
    </ligand>
</feature>
<feature type="binding site" evidence="1">
    <location>
        <position position="220"/>
    </location>
    <ligand>
        <name>L-glutamine</name>
        <dbReference type="ChEBI" id="CHEBI:58359"/>
    </ligand>
</feature>
<feature type="binding site" evidence="1">
    <location>
        <position position="246"/>
    </location>
    <ligand>
        <name>L-glutamine</name>
        <dbReference type="ChEBI" id="CHEBI:58359"/>
    </ligand>
</feature>
<feature type="binding site" evidence="1">
    <location>
        <position position="249"/>
    </location>
    <ligand>
        <name>L-glutamine</name>
        <dbReference type="ChEBI" id="CHEBI:58359"/>
    </ligand>
</feature>
<feature type="binding site" evidence="1">
    <location>
        <position position="287"/>
    </location>
    <ligand>
        <name>L-glutamine</name>
        <dbReference type="ChEBI" id="CHEBI:58359"/>
    </ligand>
</feature>
<feature type="binding site" evidence="1">
    <location>
        <position position="289"/>
    </location>
    <ligand>
        <name>L-glutamine</name>
        <dbReference type="ChEBI" id="CHEBI:58359"/>
    </ligand>
</feature>
<feature type="binding site" evidence="1">
    <location>
        <position position="290"/>
    </location>
    <ligand>
        <name>L-glutamine</name>
        <dbReference type="ChEBI" id="CHEBI:58359"/>
    </ligand>
</feature>
<proteinExistence type="inferred from homology"/>
<comment type="function">
    <text evidence="1">Small subunit of the glutamine-dependent carbamoyl phosphate synthetase (CPSase). CPSase catalyzes the formation of carbamoyl phosphate from the ammonia moiety of glutamine, carbonate, and phosphate donated by ATP, constituting the first step of 2 biosynthetic pathways, one leading to arginine and/or urea and the other to pyrimidine nucleotides. The small subunit (glutamine amidotransferase) binds and cleaves glutamine to supply the large subunit with the substrate ammonia.</text>
</comment>
<comment type="catalytic activity">
    <reaction evidence="1">
        <text>hydrogencarbonate + L-glutamine + 2 ATP + H2O = carbamoyl phosphate + L-glutamate + 2 ADP + phosphate + 2 H(+)</text>
        <dbReference type="Rhea" id="RHEA:18633"/>
        <dbReference type="ChEBI" id="CHEBI:15377"/>
        <dbReference type="ChEBI" id="CHEBI:15378"/>
        <dbReference type="ChEBI" id="CHEBI:17544"/>
        <dbReference type="ChEBI" id="CHEBI:29985"/>
        <dbReference type="ChEBI" id="CHEBI:30616"/>
        <dbReference type="ChEBI" id="CHEBI:43474"/>
        <dbReference type="ChEBI" id="CHEBI:58228"/>
        <dbReference type="ChEBI" id="CHEBI:58359"/>
        <dbReference type="ChEBI" id="CHEBI:456216"/>
        <dbReference type="EC" id="6.3.5.5"/>
    </reaction>
</comment>
<comment type="catalytic activity">
    <molecule>Carbamoyl phosphate synthase small chain</molecule>
    <reaction evidence="1">
        <text>L-glutamine + H2O = L-glutamate + NH4(+)</text>
        <dbReference type="Rhea" id="RHEA:15889"/>
        <dbReference type="ChEBI" id="CHEBI:15377"/>
        <dbReference type="ChEBI" id="CHEBI:28938"/>
        <dbReference type="ChEBI" id="CHEBI:29985"/>
        <dbReference type="ChEBI" id="CHEBI:58359"/>
    </reaction>
</comment>
<comment type="pathway">
    <text evidence="1">Amino-acid biosynthesis; L-arginine biosynthesis; carbamoyl phosphate from bicarbonate: step 1/1.</text>
</comment>
<comment type="pathway">
    <text evidence="1">Pyrimidine metabolism; UMP biosynthesis via de novo pathway; (S)-dihydroorotate from bicarbonate: step 1/3.</text>
</comment>
<comment type="subunit">
    <text evidence="1">Composed of two chains; the small (or glutamine) chain promotes the hydrolysis of glutamine to ammonia, which is used by the large (or ammonia) chain to synthesize carbamoyl phosphate. Tetramer of heterodimers (alpha,beta)4.</text>
</comment>
<comment type="similarity">
    <text evidence="1">Belongs to the CarA family.</text>
</comment>
<sequence>MKRQLILEDGTVLIGTGFGGEIEKSGEVVFTTGMTGYQETLSDPSYCGQIVTFTYPLIGNYGINRDDFESIHPSVNGLIVNEICDHPSNFRNEISLNDYLKERNIPGLAGIDTRKLTRKIRQYGTLRGRLCNMDADVEYIVSQLKATVFTDHVKRVSTKDPYPSPGRGHRVVLVDFGMKHGILRELNKRDCDVIVVPYNTTAEEILRLSPDGIMLSNGPGDPKDVPEAIEMLKDIIGKVPLFGICLGHQLFALASGANTSKLKFGHRGLNHPVKNIATGKVAITSQNHGYAVEEESVENTELEITHVALNDGTVEGLRHKKFPAFTVQYHPEASAGPEDANDLFEDFLTMIENFKKEGEELCQNA</sequence>
<name>CARA_BACHK</name>
<organism>
    <name type="scientific">Bacillus thuringiensis subsp. konkukian (strain 97-27)</name>
    <dbReference type="NCBI Taxonomy" id="281309"/>
    <lineage>
        <taxon>Bacteria</taxon>
        <taxon>Bacillati</taxon>
        <taxon>Bacillota</taxon>
        <taxon>Bacilli</taxon>
        <taxon>Bacillales</taxon>
        <taxon>Bacillaceae</taxon>
        <taxon>Bacillus</taxon>
        <taxon>Bacillus cereus group</taxon>
    </lineage>
</organism>
<keyword id="KW-0028">Amino-acid biosynthesis</keyword>
<keyword id="KW-0055">Arginine biosynthesis</keyword>
<keyword id="KW-0067">ATP-binding</keyword>
<keyword id="KW-0315">Glutamine amidotransferase</keyword>
<keyword id="KW-0436">Ligase</keyword>
<keyword id="KW-0547">Nucleotide-binding</keyword>
<keyword id="KW-0665">Pyrimidine biosynthesis</keyword>
<gene>
    <name evidence="1" type="primary">carA</name>
    <name type="ordered locus">BT9727_3629</name>
</gene>
<accession>Q6HES7</accession>
<dbReference type="EC" id="6.3.5.5" evidence="1"/>
<dbReference type="EMBL" id="AE017355">
    <property type="protein sequence ID" value="AAT61300.1"/>
    <property type="molecule type" value="Genomic_DNA"/>
</dbReference>
<dbReference type="RefSeq" id="WP_000828679.1">
    <property type="nucleotide sequence ID" value="NC_005957.1"/>
</dbReference>
<dbReference type="RefSeq" id="YP_037949.1">
    <property type="nucleotide sequence ID" value="NC_005957.1"/>
</dbReference>
<dbReference type="SMR" id="Q6HES7"/>
<dbReference type="MEROPS" id="C26.A33"/>
<dbReference type="KEGG" id="btk:BT9727_3629"/>
<dbReference type="PATRIC" id="fig|281309.8.peg.3867"/>
<dbReference type="HOGENOM" id="CLU_035901_2_1_9"/>
<dbReference type="UniPathway" id="UPA00068">
    <property type="reaction ID" value="UER00171"/>
</dbReference>
<dbReference type="UniPathway" id="UPA00070">
    <property type="reaction ID" value="UER00115"/>
</dbReference>
<dbReference type="Proteomes" id="UP000001301">
    <property type="component" value="Chromosome"/>
</dbReference>
<dbReference type="GO" id="GO:0005524">
    <property type="term" value="F:ATP binding"/>
    <property type="evidence" value="ECO:0007669"/>
    <property type="project" value="UniProtKB-UniRule"/>
</dbReference>
<dbReference type="GO" id="GO:0004088">
    <property type="term" value="F:carbamoyl-phosphate synthase (glutamine-hydrolyzing) activity"/>
    <property type="evidence" value="ECO:0007669"/>
    <property type="project" value="UniProtKB-UniRule"/>
</dbReference>
<dbReference type="GO" id="GO:0004359">
    <property type="term" value="F:glutaminase activity"/>
    <property type="evidence" value="ECO:0007669"/>
    <property type="project" value="RHEA"/>
</dbReference>
<dbReference type="GO" id="GO:0006207">
    <property type="term" value="P:'de novo' pyrimidine nucleobase biosynthetic process"/>
    <property type="evidence" value="ECO:0007669"/>
    <property type="project" value="InterPro"/>
</dbReference>
<dbReference type="GO" id="GO:0044205">
    <property type="term" value="P:'de novo' UMP biosynthetic process"/>
    <property type="evidence" value="ECO:0007669"/>
    <property type="project" value="UniProtKB-UniRule"/>
</dbReference>
<dbReference type="GO" id="GO:0006541">
    <property type="term" value="P:glutamine metabolic process"/>
    <property type="evidence" value="ECO:0007669"/>
    <property type="project" value="InterPro"/>
</dbReference>
<dbReference type="GO" id="GO:0006526">
    <property type="term" value="P:L-arginine biosynthetic process"/>
    <property type="evidence" value="ECO:0007669"/>
    <property type="project" value="UniProtKB-UniRule"/>
</dbReference>
<dbReference type="CDD" id="cd01744">
    <property type="entry name" value="GATase1_CPSase"/>
    <property type="match status" value="1"/>
</dbReference>
<dbReference type="FunFam" id="3.40.50.880:FF:000029">
    <property type="entry name" value="Carbamoyl-phosphate synthase small chain"/>
    <property type="match status" value="1"/>
</dbReference>
<dbReference type="FunFam" id="3.50.30.20:FF:000001">
    <property type="entry name" value="Carbamoyl-phosphate synthase small chain"/>
    <property type="match status" value="1"/>
</dbReference>
<dbReference type="Gene3D" id="3.40.50.880">
    <property type="match status" value="1"/>
</dbReference>
<dbReference type="Gene3D" id="3.50.30.20">
    <property type="entry name" value="Carbamoyl-phosphate synthase small subunit, N-terminal domain"/>
    <property type="match status" value="1"/>
</dbReference>
<dbReference type="HAMAP" id="MF_01209">
    <property type="entry name" value="CPSase_S_chain"/>
    <property type="match status" value="1"/>
</dbReference>
<dbReference type="InterPro" id="IPR050472">
    <property type="entry name" value="Anth_synth/Amidotransfase"/>
</dbReference>
<dbReference type="InterPro" id="IPR006274">
    <property type="entry name" value="CarbamoylP_synth_ssu"/>
</dbReference>
<dbReference type="InterPro" id="IPR002474">
    <property type="entry name" value="CarbamoylP_synth_ssu_N"/>
</dbReference>
<dbReference type="InterPro" id="IPR036480">
    <property type="entry name" value="CarbP_synth_ssu_N_sf"/>
</dbReference>
<dbReference type="InterPro" id="IPR029062">
    <property type="entry name" value="Class_I_gatase-like"/>
</dbReference>
<dbReference type="InterPro" id="IPR035686">
    <property type="entry name" value="CPSase_GATase1"/>
</dbReference>
<dbReference type="InterPro" id="IPR017926">
    <property type="entry name" value="GATASE"/>
</dbReference>
<dbReference type="NCBIfam" id="TIGR01368">
    <property type="entry name" value="CPSaseIIsmall"/>
    <property type="match status" value="1"/>
</dbReference>
<dbReference type="NCBIfam" id="NF009475">
    <property type="entry name" value="PRK12838.1"/>
    <property type="match status" value="1"/>
</dbReference>
<dbReference type="PANTHER" id="PTHR43418:SF7">
    <property type="entry name" value="CARBAMOYL-PHOSPHATE SYNTHASE SMALL CHAIN"/>
    <property type="match status" value="1"/>
</dbReference>
<dbReference type="PANTHER" id="PTHR43418">
    <property type="entry name" value="MULTIFUNCTIONAL TRYPTOPHAN BIOSYNTHESIS PROTEIN-RELATED"/>
    <property type="match status" value="1"/>
</dbReference>
<dbReference type="Pfam" id="PF00988">
    <property type="entry name" value="CPSase_sm_chain"/>
    <property type="match status" value="1"/>
</dbReference>
<dbReference type="Pfam" id="PF00117">
    <property type="entry name" value="GATase"/>
    <property type="match status" value="1"/>
</dbReference>
<dbReference type="PRINTS" id="PR00097">
    <property type="entry name" value="ANTSNTHASEII"/>
</dbReference>
<dbReference type="PRINTS" id="PR00099">
    <property type="entry name" value="CPSGATASE"/>
</dbReference>
<dbReference type="PRINTS" id="PR00096">
    <property type="entry name" value="GATASE"/>
</dbReference>
<dbReference type="SMART" id="SM01097">
    <property type="entry name" value="CPSase_sm_chain"/>
    <property type="match status" value="1"/>
</dbReference>
<dbReference type="SUPFAM" id="SSF52021">
    <property type="entry name" value="Carbamoyl phosphate synthetase, small subunit N-terminal domain"/>
    <property type="match status" value="1"/>
</dbReference>
<dbReference type="SUPFAM" id="SSF52317">
    <property type="entry name" value="Class I glutamine amidotransferase-like"/>
    <property type="match status" value="1"/>
</dbReference>
<dbReference type="PROSITE" id="PS51273">
    <property type="entry name" value="GATASE_TYPE_1"/>
    <property type="match status" value="1"/>
</dbReference>
<evidence type="ECO:0000255" key="1">
    <source>
        <dbReference type="HAMAP-Rule" id="MF_01209"/>
    </source>
</evidence>